<name>THIS_BACSU</name>
<evidence type="ECO:0000250" key="1"/>
<evidence type="ECO:0000269" key="2">
    <source>
    </source>
</evidence>
<evidence type="ECO:0000269" key="3">
    <source>
    </source>
</evidence>
<evidence type="ECO:0000305" key="4"/>
<evidence type="ECO:0007829" key="5">
    <source>
        <dbReference type="PDB" id="1TYG"/>
    </source>
</evidence>
<accession>O31617</accession>
<keyword id="KW-0002">3D-structure</keyword>
<keyword id="KW-0547">Nucleotide-binding</keyword>
<keyword id="KW-0597">Phosphoprotein</keyword>
<keyword id="KW-1185">Reference proteome</keyword>
<keyword id="KW-0784">Thiamine biosynthesis</keyword>
<protein>
    <recommendedName>
        <fullName>Sulfur carrier protein ThiS</fullName>
    </recommendedName>
    <alternativeName>
        <fullName>Thiamine biosynthesis protein ThiS</fullName>
    </alternativeName>
</protein>
<proteinExistence type="evidence at protein level"/>
<comment type="function">
    <text evidence="3">Is the sulfur donor in the synthesis of the thiazole phosphate moiety of thiamine phosphate.</text>
</comment>
<comment type="pathway">
    <text>Cofactor biosynthesis; thiamine diphosphate biosynthesis.</text>
</comment>
<comment type="subunit">
    <text evidence="2">Forms heterodimers with ThiG.</text>
</comment>
<comment type="PTM">
    <text evidence="1">C-terminal thiocarboxylation occurs in 2 steps, it is first acyl-adenylated (-COAMP) by ThiF, then thiocarboxylated (-COSH) by ThiI.</text>
</comment>
<comment type="similarity">
    <text evidence="4">Belongs to the sulfur carrier protein ThiS family.</text>
</comment>
<organism>
    <name type="scientific">Bacillus subtilis (strain 168)</name>
    <dbReference type="NCBI Taxonomy" id="224308"/>
    <lineage>
        <taxon>Bacteria</taxon>
        <taxon>Bacillati</taxon>
        <taxon>Bacillota</taxon>
        <taxon>Bacilli</taxon>
        <taxon>Bacillales</taxon>
        <taxon>Bacillaceae</taxon>
        <taxon>Bacillus</taxon>
    </lineage>
</organism>
<feature type="chain" id="PRO_0000391751" description="Sulfur carrier protein ThiS">
    <location>
        <begin position="1"/>
        <end position="66"/>
    </location>
</feature>
<feature type="modified residue" description="1-thioglycine; alternate" evidence="1">
    <location>
        <position position="66"/>
    </location>
</feature>
<feature type="modified residue" description="Glycyl adenylate; alternate" evidence="1">
    <location>
        <position position="66"/>
    </location>
</feature>
<feature type="strand" evidence="5">
    <location>
        <begin position="2"/>
        <end position="4"/>
    </location>
</feature>
<feature type="strand" evidence="5">
    <location>
        <begin position="7"/>
        <end position="9"/>
    </location>
</feature>
<feature type="strand" evidence="5">
    <location>
        <begin position="12"/>
        <end position="14"/>
    </location>
</feature>
<feature type="helix" evidence="5">
    <location>
        <begin position="18"/>
        <end position="24"/>
    </location>
</feature>
<feature type="strand" evidence="5">
    <location>
        <begin position="33"/>
        <end position="36"/>
    </location>
</feature>
<feature type="strand" evidence="5">
    <location>
        <begin position="39"/>
        <end position="41"/>
    </location>
</feature>
<feature type="helix" evidence="5">
    <location>
        <begin position="43"/>
        <end position="45"/>
    </location>
</feature>
<feature type="turn" evidence="5">
    <location>
        <begin position="46"/>
        <end position="48"/>
    </location>
</feature>
<feature type="strand" evidence="5">
    <location>
        <begin position="53"/>
        <end position="62"/>
    </location>
</feature>
<dbReference type="EMBL" id="AL009126">
    <property type="protein sequence ID" value="CAB13025.1"/>
    <property type="molecule type" value="Genomic_DNA"/>
</dbReference>
<dbReference type="PIR" id="C69845">
    <property type="entry name" value="C69845"/>
</dbReference>
<dbReference type="RefSeq" id="NP_389050.1">
    <property type="nucleotide sequence ID" value="NC_000964.3"/>
</dbReference>
<dbReference type="RefSeq" id="WP_010886482.1">
    <property type="nucleotide sequence ID" value="NZ_OZ025638.1"/>
</dbReference>
<dbReference type="PDB" id="1TYG">
    <property type="method" value="X-ray"/>
    <property type="resolution" value="3.15 A"/>
    <property type="chains" value="B/G=1-66"/>
</dbReference>
<dbReference type="PDBsum" id="1TYG"/>
<dbReference type="SMR" id="O31617"/>
<dbReference type="FunCoup" id="O31617">
    <property type="interactions" value="20"/>
</dbReference>
<dbReference type="IntAct" id="O31617">
    <property type="interactions" value="1"/>
</dbReference>
<dbReference type="STRING" id="224308.BSU11680"/>
<dbReference type="PaxDb" id="224308-BSU11680"/>
<dbReference type="EnsemblBacteria" id="CAB13025">
    <property type="protein sequence ID" value="CAB13025"/>
    <property type="gene ID" value="BSU_11680"/>
</dbReference>
<dbReference type="GeneID" id="939811"/>
<dbReference type="KEGG" id="bsu:BSU11680"/>
<dbReference type="eggNOG" id="COG2104">
    <property type="taxonomic scope" value="Bacteria"/>
</dbReference>
<dbReference type="InParanoid" id="O31617"/>
<dbReference type="OrthoDB" id="9798559at2"/>
<dbReference type="PhylomeDB" id="O31617"/>
<dbReference type="BioCyc" id="BSUB:BSU11680-MONOMER"/>
<dbReference type="BioCyc" id="MetaCyc:BSU11680-MONOMER"/>
<dbReference type="UniPathway" id="UPA00060"/>
<dbReference type="EvolutionaryTrace" id="O31617"/>
<dbReference type="Proteomes" id="UP000001570">
    <property type="component" value="Chromosome"/>
</dbReference>
<dbReference type="GO" id="GO:1902503">
    <property type="term" value="C:adenylyltransferase complex"/>
    <property type="evidence" value="ECO:0000318"/>
    <property type="project" value="GO_Central"/>
</dbReference>
<dbReference type="GO" id="GO:0000166">
    <property type="term" value="F:nucleotide binding"/>
    <property type="evidence" value="ECO:0007669"/>
    <property type="project" value="UniProtKB-KW"/>
</dbReference>
<dbReference type="GO" id="GO:0097163">
    <property type="term" value="F:sulfur carrier activity"/>
    <property type="evidence" value="ECO:0000318"/>
    <property type="project" value="GO_Central"/>
</dbReference>
<dbReference type="GO" id="GO:0009228">
    <property type="term" value="P:thiamine biosynthetic process"/>
    <property type="evidence" value="ECO:0007669"/>
    <property type="project" value="UniProtKB-KW"/>
</dbReference>
<dbReference type="GO" id="GO:0009229">
    <property type="term" value="P:thiamine diphosphate biosynthetic process"/>
    <property type="evidence" value="ECO:0007669"/>
    <property type="project" value="UniProtKB-UniPathway"/>
</dbReference>
<dbReference type="GO" id="GO:0052837">
    <property type="term" value="P:thiazole biosynthetic process"/>
    <property type="evidence" value="ECO:0000318"/>
    <property type="project" value="GO_Central"/>
</dbReference>
<dbReference type="CDD" id="cd00565">
    <property type="entry name" value="Ubl_ThiS"/>
    <property type="match status" value="1"/>
</dbReference>
<dbReference type="Gene3D" id="3.10.20.30">
    <property type="match status" value="1"/>
</dbReference>
<dbReference type="InterPro" id="IPR012675">
    <property type="entry name" value="Beta-grasp_dom_sf"/>
</dbReference>
<dbReference type="InterPro" id="IPR016155">
    <property type="entry name" value="Mopterin_synth/thiamin_S_b"/>
</dbReference>
<dbReference type="InterPro" id="IPR010035">
    <property type="entry name" value="Thi_S"/>
</dbReference>
<dbReference type="InterPro" id="IPR003749">
    <property type="entry name" value="ThiS/MoaD-like"/>
</dbReference>
<dbReference type="NCBIfam" id="TIGR01683">
    <property type="entry name" value="thiS"/>
    <property type="match status" value="1"/>
</dbReference>
<dbReference type="PANTHER" id="PTHR34472">
    <property type="entry name" value="SULFUR CARRIER PROTEIN THIS"/>
    <property type="match status" value="1"/>
</dbReference>
<dbReference type="PANTHER" id="PTHR34472:SF1">
    <property type="entry name" value="SULFUR CARRIER PROTEIN THIS"/>
    <property type="match status" value="1"/>
</dbReference>
<dbReference type="Pfam" id="PF02597">
    <property type="entry name" value="ThiS"/>
    <property type="match status" value="1"/>
</dbReference>
<dbReference type="SUPFAM" id="SSF54285">
    <property type="entry name" value="MoaD/ThiS"/>
    <property type="match status" value="1"/>
</dbReference>
<gene>
    <name type="primary">thiS</name>
    <name type="synonym">yjbS</name>
    <name type="ordered locus">BSU11680</name>
</gene>
<sequence length="66" mass="7626">MLQLNGKDVKWKKDTGTIQDLLASYQLENKIVIVERNKEIIGKERYHEVELCDRDVIEIVHFVGGG</sequence>
<reference key="1">
    <citation type="journal article" date="1997" name="Nature">
        <title>The complete genome sequence of the Gram-positive bacterium Bacillus subtilis.</title>
        <authorList>
            <person name="Kunst F."/>
            <person name="Ogasawara N."/>
            <person name="Moszer I."/>
            <person name="Albertini A.M."/>
            <person name="Alloni G."/>
            <person name="Azevedo V."/>
            <person name="Bertero M.G."/>
            <person name="Bessieres P."/>
            <person name="Bolotin A."/>
            <person name="Borchert S."/>
            <person name="Borriss R."/>
            <person name="Boursier L."/>
            <person name="Brans A."/>
            <person name="Braun M."/>
            <person name="Brignell S.C."/>
            <person name="Bron S."/>
            <person name="Brouillet S."/>
            <person name="Bruschi C.V."/>
            <person name="Caldwell B."/>
            <person name="Capuano V."/>
            <person name="Carter N.M."/>
            <person name="Choi S.-K."/>
            <person name="Codani J.-J."/>
            <person name="Connerton I.F."/>
            <person name="Cummings N.J."/>
            <person name="Daniel R.A."/>
            <person name="Denizot F."/>
            <person name="Devine K.M."/>
            <person name="Duesterhoeft A."/>
            <person name="Ehrlich S.D."/>
            <person name="Emmerson P.T."/>
            <person name="Entian K.-D."/>
            <person name="Errington J."/>
            <person name="Fabret C."/>
            <person name="Ferrari E."/>
            <person name="Foulger D."/>
            <person name="Fritz C."/>
            <person name="Fujita M."/>
            <person name="Fujita Y."/>
            <person name="Fuma S."/>
            <person name="Galizzi A."/>
            <person name="Galleron N."/>
            <person name="Ghim S.-Y."/>
            <person name="Glaser P."/>
            <person name="Goffeau A."/>
            <person name="Golightly E.J."/>
            <person name="Grandi G."/>
            <person name="Guiseppi G."/>
            <person name="Guy B.J."/>
            <person name="Haga K."/>
            <person name="Haiech J."/>
            <person name="Harwood C.R."/>
            <person name="Henaut A."/>
            <person name="Hilbert H."/>
            <person name="Holsappel S."/>
            <person name="Hosono S."/>
            <person name="Hullo M.-F."/>
            <person name="Itaya M."/>
            <person name="Jones L.-M."/>
            <person name="Joris B."/>
            <person name="Karamata D."/>
            <person name="Kasahara Y."/>
            <person name="Klaerr-Blanchard M."/>
            <person name="Klein C."/>
            <person name="Kobayashi Y."/>
            <person name="Koetter P."/>
            <person name="Koningstein G."/>
            <person name="Krogh S."/>
            <person name="Kumano M."/>
            <person name="Kurita K."/>
            <person name="Lapidus A."/>
            <person name="Lardinois S."/>
            <person name="Lauber J."/>
            <person name="Lazarevic V."/>
            <person name="Lee S.-M."/>
            <person name="Levine A."/>
            <person name="Liu H."/>
            <person name="Masuda S."/>
            <person name="Mauel C."/>
            <person name="Medigue C."/>
            <person name="Medina N."/>
            <person name="Mellado R.P."/>
            <person name="Mizuno M."/>
            <person name="Moestl D."/>
            <person name="Nakai S."/>
            <person name="Noback M."/>
            <person name="Noone D."/>
            <person name="O'Reilly M."/>
            <person name="Ogawa K."/>
            <person name="Ogiwara A."/>
            <person name="Oudega B."/>
            <person name="Park S.-H."/>
            <person name="Parro V."/>
            <person name="Pohl T.M."/>
            <person name="Portetelle D."/>
            <person name="Porwollik S."/>
            <person name="Prescott A.M."/>
            <person name="Presecan E."/>
            <person name="Pujic P."/>
            <person name="Purnelle B."/>
            <person name="Rapoport G."/>
            <person name="Rey M."/>
            <person name="Reynolds S."/>
            <person name="Rieger M."/>
            <person name="Rivolta C."/>
            <person name="Rocha E."/>
            <person name="Roche B."/>
            <person name="Rose M."/>
            <person name="Sadaie Y."/>
            <person name="Sato T."/>
            <person name="Scanlan E."/>
            <person name="Schleich S."/>
            <person name="Schroeter R."/>
            <person name="Scoffone F."/>
            <person name="Sekiguchi J."/>
            <person name="Sekowska A."/>
            <person name="Seror S.J."/>
            <person name="Serror P."/>
            <person name="Shin B.-S."/>
            <person name="Soldo B."/>
            <person name="Sorokin A."/>
            <person name="Tacconi E."/>
            <person name="Takagi T."/>
            <person name="Takahashi H."/>
            <person name="Takemaru K."/>
            <person name="Takeuchi M."/>
            <person name="Tamakoshi A."/>
            <person name="Tanaka T."/>
            <person name="Terpstra P."/>
            <person name="Tognoni A."/>
            <person name="Tosato V."/>
            <person name="Uchiyama S."/>
            <person name="Vandenbol M."/>
            <person name="Vannier F."/>
            <person name="Vassarotti A."/>
            <person name="Viari A."/>
            <person name="Wambutt R."/>
            <person name="Wedler E."/>
            <person name="Wedler H."/>
            <person name="Weitzenegger T."/>
            <person name="Winters P."/>
            <person name="Wipat A."/>
            <person name="Yamamoto H."/>
            <person name="Yamane K."/>
            <person name="Yasumoto K."/>
            <person name="Yata K."/>
            <person name="Yoshida K."/>
            <person name="Yoshikawa H.-F."/>
            <person name="Zumstein E."/>
            <person name="Yoshikawa H."/>
            <person name="Danchin A."/>
        </authorList>
    </citation>
    <scope>NUCLEOTIDE SEQUENCE [LARGE SCALE GENOMIC DNA]</scope>
    <source>
        <strain>168</strain>
    </source>
</reference>
<reference key="2">
    <citation type="journal article" date="2003" name="Biochemistry">
        <title>Biosynthesis of the thiazole moiety of thiamin pyrophosphate (vitamin B1).</title>
        <authorList>
            <person name="Park J.-H."/>
            <person name="Dorrestein P.C."/>
            <person name="Zhai H."/>
            <person name="Kinsland C."/>
            <person name="McLafferty F.W."/>
            <person name="Begley T.P."/>
        </authorList>
    </citation>
    <scope>CHARACTERIZATION</scope>
    <source>
        <strain>168 / CU1065</strain>
    </source>
</reference>
<reference key="3">
    <citation type="journal article" date="2004" name="Chem. Biol.">
        <title>The biosynthesis of the thiazole phosphate moiety of thiamin: the sulfur transfer mediated by the sulfur carrier protein ThiS.</title>
        <authorList>
            <person name="Dorrestein P.C."/>
            <person name="Zhai H."/>
            <person name="McLafferty F.W."/>
            <person name="Begley T.P."/>
        </authorList>
    </citation>
    <scope>FUNCTION IN SULFUR TRANSFER TO THIAZOLE</scope>
</reference>
<reference key="4">
    <citation type="journal article" date="2004" name="Biochemistry">
        <title>Thiamin biosynthesis in Bacillus subtilis: structure of the thiazole synthase/sulfur carrier protein complex.</title>
        <authorList>
            <person name="Settembre E.C."/>
            <person name="Dorrestein P.C."/>
            <person name="Zhai H."/>
            <person name="Chatterjee A."/>
            <person name="McLafferty F.W."/>
            <person name="Begley T.P."/>
            <person name="Ealick S.E."/>
        </authorList>
    </citation>
    <scope>X-RAY CRYSTALLOGRAPHY (3.15 ANGSTROMS) IN COMPLEX WITH THIG</scope>
    <scope>SUBUNIT</scope>
</reference>